<gene>
    <name type="ordered locus">VC0395_A2587</name>
    <name type="ordered locus">VC395_0240</name>
</gene>
<keyword id="KW-1003">Cell membrane</keyword>
<keyword id="KW-0472">Membrane</keyword>
<keyword id="KW-0812">Transmembrane</keyword>
<keyword id="KW-1133">Transmembrane helix</keyword>
<name>Y3787_VIBC3</name>
<sequence>MERLIEKLLYSSRWIMAPIYLGLSLLLLALGIKFFQEIFHLLPNIFTIKEVDLILVALSLIDVSLVGGLIVMVMFSGYENFVSKLDVDESEDKLGWLGKLDTSSLKNKVSASIVAISSIHLLKVFMNTENIESDKIKWYLLLHITFVVSAFAMGYLDKITKK</sequence>
<feature type="chain" id="PRO_1000071464" description="UPF0114 protein VC0395_A2587/VC395_0240">
    <location>
        <begin position="1"/>
        <end position="162"/>
    </location>
</feature>
<feature type="transmembrane region" description="Helical" evidence="1">
    <location>
        <begin position="15"/>
        <end position="35"/>
    </location>
</feature>
<feature type="transmembrane region" description="Helical" evidence="1">
    <location>
        <begin position="53"/>
        <end position="73"/>
    </location>
</feature>
<feature type="transmembrane region" description="Helical" evidence="1">
    <location>
        <begin position="109"/>
        <end position="126"/>
    </location>
</feature>
<feature type="transmembrane region" description="Helical" evidence="1">
    <location>
        <begin position="136"/>
        <end position="156"/>
    </location>
</feature>
<dbReference type="EMBL" id="CP000627">
    <property type="protein sequence ID" value="ABQ21510.1"/>
    <property type="molecule type" value="Genomic_DNA"/>
</dbReference>
<dbReference type="EMBL" id="CP001235">
    <property type="protein sequence ID" value="ACP08265.1"/>
    <property type="molecule type" value="Genomic_DNA"/>
</dbReference>
<dbReference type="RefSeq" id="WP_000440285.1">
    <property type="nucleotide sequence ID" value="NZ_JAACZH010000031.1"/>
</dbReference>
<dbReference type="KEGG" id="vco:VC0395_A2587"/>
<dbReference type="KEGG" id="vcr:VC395_0240"/>
<dbReference type="PATRIC" id="fig|345073.21.peg.227"/>
<dbReference type="eggNOG" id="COG2862">
    <property type="taxonomic scope" value="Bacteria"/>
</dbReference>
<dbReference type="HOGENOM" id="CLU_097887_1_1_6"/>
<dbReference type="OrthoDB" id="9783569at2"/>
<dbReference type="Proteomes" id="UP000000249">
    <property type="component" value="Chromosome 2"/>
</dbReference>
<dbReference type="GO" id="GO:0005886">
    <property type="term" value="C:plasma membrane"/>
    <property type="evidence" value="ECO:0007669"/>
    <property type="project" value="UniProtKB-SubCell"/>
</dbReference>
<dbReference type="HAMAP" id="MF_00143">
    <property type="entry name" value="UPF0114"/>
    <property type="match status" value="1"/>
</dbReference>
<dbReference type="InterPro" id="IPR005134">
    <property type="entry name" value="UPF0114"/>
</dbReference>
<dbReference type="InterPro" id="IPR020761">
    <property type="entry name" value="UPF0114_bac"/>
</dbReference>
<dbReference type="NCBIfam" id="TIGR00645">
    <property type="entry name" value="HI0507"/>
    <property type="match status" value="1"/>
</dbReference>
<dbReference type="PANTHER" id="PTHR38596">
    <property type="entry name" value="UPF0114 PROTEIN YQHA"/>
    <property type="match status" value="1"/>
</dbReference>
<dbReference type="PANTHER" id="PTHR38596:SF1">
    <property type="entry name" value="UPF0114 PROTEIN YQHA"/>
    <property type="match status" value="1"/>
</dbReference>
<dbReference type="Pfam" id="PF03350">
    <property type="entry name" value="UPF0114"/>
    <property type="match status" value="1"/>
</dbReference>
<protein>
    <recommendedName>
        <fullName evidence="1">UPF0114 protein VC0395_A2587/VC395_0240</fullName>
    </recommendedName>
</protein>
<evidence type="ECO:0000255" key="1">
    <source>
        <dbReference type="HAMAP-Rule" id="MF_00143"/>
    </source>
</evidence>
<accession>A5F419</accession>
<accession>C3M386</accession>
<comment type="subcellular location">
    <subcellularLocation>
        <location evidence="1">Cell membrane</location>
        <topology evidence="1">Multi-pass membrane protein</topology>
    </subcellularLocation>
</comment>
<comment type="similarity">
    <text evidence="1">Belongs to the UPF0114 family.</text>
</comment>
<reference key="1">
    <citation type="submission" date="2007-03" db="EMBL/GenBank/DDBJ databases">
        <authorList>
            <person name="Heidelberg J."/>
        </authorList>
    </citation>
    <scope>NUCLEOTIDE SEQUENCE [LARGE SCALE GENOMIC DNA]</scope>
    <source>
        <strain>ATCC 39541 / Classical Ogawa 395 / O395</strain>
    </source>
</reference>
<reference key="2">
    <citation type="journal article" date="2008" name="PLoS ONE">
        <title>A recalibrated molecular clock and independent origins for the cholera pandemic clones.</title>
        <authorList>
            <person name="Feng L."/>
            <person name="Reeves P.R."/>
            <person name="Lan R."/>
            <person name="Ren Y."/>
            <person name="Gao C."/>
            <person name="Zhou Z."/>
            <person name="Ren Y."/>
            <person name="Cheng J."/>
            <person name="Wang W."/>
            <person name="Wang J."/>
            <person name="Qian W."/>
            <person name="Li D."/>
            <person name="Wang L."/>
        </authorList>
    </citation>
    <scope>NUCLEOTIDE SEQUENCE [LARGE SCALE GENOMIC DNA]</scope>
    <source>
        <strain>ATCC 39541 / Classical Ogawa 395 / O395</strain>
    </source>
</reference>
<organism>
    <name type="scientific">Vibrio cholerae serotype O1 (strain ATCC 39541 / Classical Ogawa 395 / O395)</name>
    <dbReference type="NCBI Taxonomy" id="345073"/>
    <lineage>
        <taxon>Bacteria</taxon>
        <taxon>Pseudomonadati</taxon>
        <taxon>Pseudomonadota</taxon>
        <taxon>Gammaproteobacteria</taxon>
        <taxon>Vibrionales</taxon>
        <taxon>Vibrionaceae</taxon>
        <taxon>Vibrio</taxon>
    </lineage>
</organism>
<proteinExistence type="inferred from homology"/>